<gene>
    <name evidence="1" type="primary">tmk</name>
    <name type="ordered locus">RAF_ORF0952</name>
</gene>
<organism>
    <name type="scientific">Rickettsia africae (strain ESF-5)</name>
    <dbReference type="NCBI Taxonomy" id="347255"/>
    <lineage>
        <taxon>Bacteria</taxon>
        <taxon>Pseudomonadati</taxon>
        <taxon>Pseudomonadota</taxon>
        <taxon>Alphaproteobacteria</taxon>
        <taxon>Rickettsiales</taxon>
        <taxon>Rickettsiaceae</taxon>
        <taxon>Rickettsieae</taxon>
        <taxon>Rickettsia</taxon>
        <taxon>spotted fever group</taxon>
    </lineage>
</organism>
<accession>C3PLG0</accession>
<dbReference type="EC" id="2.7.4.9" evidence="1"/>
<dbReference type="EMBL" id="CP001612">
    <property type="protein sequence ID" value="ACP53800.1"/>
    <property type="molecule type" value="Genomic_DNA"/>
</dbReference>
<dbReference type="RefSeq" id="WP_012719945.1">
    <property type="nucleotide sequence ID" value="NC_012633.1"/>
</dbReference>
<dbReference type="SMR" id="C3PLG0"/>
<dbReference type="KEGG" id="raf:RAF_ORF0952"/>
<dbReference type="HOGENOM" id="CLU_049131_0_2_5"/>
<dbReference type="Proteomes" id="UP000002305">
    <property type="component" value="Chromosome"/>
</dbReference>
<dbReference type="GO" id="GO:0005829">
    <property type="term" value="C:cytosol"/>
    <property type="evidence" value="ECO:0007669"/>
    <property type="project" value="TreeGrafter"/>
</dbReference>
<dbReference type="GO" id="GO:0005524">
    <property type="term" value="F:ATP binding"/>
    <property type="evidence" value="ECO:0007669"/>
    <property type="project" value="UniProtKB-UniRule"/>
</dbReference>
<dbReference type="GO" id="GO:0004798">
    <property type="term" value="F:dTMP kinase activity"/>
    <property type="evidence" value="ECO:0007669"/>
    <property type="project" value="UniProtKB-UniRule"/>
</dbReference>
<dbReference type="GO" id="GO:0006233">
    <property type="term" value="P:dTDP biosynthetic process"/>
    <property type="evidence" value="ECO:0007669"/>
    <property type="project" value="InterPro"/>
</dbReference>
<dbReference type="GO" id="GO:0006235">
    <property type="term" value="P:dTTP biosynthetic process"/>
    <property type="evidence" value="ECO:0007669"/>
    <property type="project" value="UniProtKB-UniRule"/>
</dbReference>
<dbReference type="GO" id="GO:0006227">
    <property type="term" value="P:dUDP biosynthetic process"/>
    <property type="evidence" value="ECO:0007669"/>
    <property type="project" value="TreeGrafter"/>
</dbReference>
<dbReference type="CDD" id="cd01672">
    <property type="entry name" value="TMPK"/>
    <property type="match status" value="1"/>
</dbReference>
<dbReference type="FunFam" id="3.40.50.300:FF:000225">
    <property type="entry name" value="Thymidylate kinase"/>
    <property type="match status" value="1"/>
</dbReference>
<dbReference type="Gene3D" id="3.40.50.300">
    <property type="entry name" value="P-loop containing nucleotide triphosphate hydrolases"/>
    <property type="match status" value="1"/>
</dbReference>
<dbReference type="HAMAP" id="MF_00165">
    <property type="entry name" value="Thymidylate_kinase"/>
    <property type="match status" value="1"/>
</dbReference>
<dbReference type="InterPro" id="IPR027417">
    <property type="entry name" value="P-loop_NTPase"/>
</dbReference>
<dbReference type="InterPro" id="IPR039430">
    <property type="entry name" value="Thymidylate_kin-like_dom"/>
</dbReference>
<dbReference type="InterPro" id="IPR018095">
    <property type="entry name" value="Thymidylate_kin_CS"/>
</dbReference>
<dbReference type="InterPro" id="IPR018094">
    <property type="entry name" value="Thymidylate_kinase"/>
</dbReference>
<dbReference type="NCBIfam" id="TIGR00041">
    <property type="entry name" value="DTMP_kinase"/>
    <property type="match status" value="1"/>
</dbReference>
<dbReference type="PANTHER" id="PTHR10344">
    <property type="entry name" value="THYMIDYLATE KINASE"/>
    <property type="match status" value="1"/>
</dbReference>
<dbReference type="PANTHER" id="PTHR10344:SF4">
    <property type="entry name" value="UMP-CMP KINASE 2, MITOCHONDRIAL"/>
    <property type="match status" value="1"/>
</dbReference>
<dbReference type="Pfam" id="PF02223">
    <property type="entry name" value="Thymidylate_kin"/>
    <property type="match status" value="1"/>
</dbReference>
<dbReference type="SUPFAM" id="SSF52540">
    <property type="entry name" value="P-loop containing nucleoside triphosphate hydrolases"/>
    <property type="match status" value="1"/>
</dbReference>
<dbReference type="PROSITE" id="PS01331">
    <property type="entry name" value="THYMIDYLATE_KINASE"/>
    <property type="match status" value="1"/>
</dbReference>
<sequence>MNNLKQGKFITFEGGEGIGKSTQSQMLYEYLQSQNTPVILTREVGGTIVAEKMREILVHEELLPISELLQVMAARYDHMARKIIPALQEGHIVICDRFIDSTVCYQGLELENGIDLVYNLHKTLMPSLMPDITFFIDVEPDTAIKRVNSRNMNNKFDIRGIDFYKKIYYCFKELSNRFPERIKTIKASDLSPLEVHELIKKHL</sequence>
<keyword id="KW-0067">ATP-binding</keyword>
<keyword id="KW-0418">Kinase</keyword>
<keyword id="KW-0545">Nucleotide biosynthesis</keyword>
<keyword id="KW-0547">Nucleotide-binding</keyword>
<keyword id="KW-0808">Transferase</keyword>
<reference key="1">
    <citation type="journal article" date="2009" name="BMC Genomics">
        <title>Analysis of the Rickettsia africae genome reveals that virulence acquisition in Rickettsia species may be explained by genome reduction.</title>
        <authorList>
            <person name="Fournier P.-E."/>
            <person name="El Karkouri K."/>
            <person name="Leroy Q."/>
            <person name="Robert C."/>
            <person name="Giumelli B."/>
            <person name="Renesto P."/>
            <person name="Socolovschi C."/>
            <person name="Parola P."/>
            <person name="Audic S."/>
            <person name="Raoult D."/>
        </authorList>
    </citation>
    <scope>NUCLEOTIDE SEQUENCE [LARGE SCALE GENOMIC DNA]</scope>
    <source>
        <strain>ESF-5</strain>
    </source>
</reference>
<feature type="chain" id="PRO_1000203626" description="Thymidylate kinase">
    <location>
        <begin position="1"/>
        <end position="203"/>
    </location>
</feature>
<feature type="binding site" evidence="1">
    <location>
        <begin position="14"/>
        <end position="21"/>
    </location>
    <ligand>
        <name>ATP</name>
        <dbReference type="ChEBI" id="CHEBI:30616"/>
    </ligand>
</feature>
<comment type="function">
    <text evidence="1">Phosphorylation of dTMP to form dTDP in both de novo and salvage pathways of dTTP synthesis.</text>
</comment>
<comment type="catalytic activity">
    <reaction evidence="1">
        <text>dTMP + ATP = dTDP + ADP</text>
        <dbReference type="Rhea" id="RHEA:13517"/>
        <dbReference type="ChEBI" id="CHEBI:30616"/>
        <dbReference type="ChEBI" id="CHEBI:58369"/>
        <dbReference type="ChEBI" id="CHEBI:63528"/>
        <dbReference type="ChEBI" id="CHEBI:456216"/>
        <dbReference type="EC" id="2.7.4.9"/>
    </reaction>
</comment>
<comment type="similarity">
    <text evidence="1">Belongs to the thymidylate kinase family.</text>
</comment>
<protein>
    <recommendedName>
        <fullName evidence="1">Thymidylate kinase</fullName>
        <ecNumber evidence="1">2.7.4.9</ecNumber>
    </recommendedName>
    <alternativeName>
        <fullName evidence="1">dTMP kinase</fullName>
    </alternativeName>
</protein>
<name>KTHY_RICAE</name>
<evidence type="ECO:0000255" key="1">
    <source>
        <dbReference type="HAMAP-Rule" id="MF_00165"/>
    </source>
</evidence>
<proteinExistence type="inferred from homology"/>